<dbReference type="EMBL" id="AK014954">
    <property type="protein sequence ID" value="BAB29637.1"/>
    <property type="status" value="ALT_INIT"/>
    <property type="molecule type" value="mRNA"/>
</dbReference>
<dbReference type="EMBL" id="AK082932">
    <property type="protein sequence ID" value="BAC38699.1"/>
    <property type="status" value="ALT_INIT"/>
    <property type="molecule type" value="mRNA"/>
</dbReference>
<dbReference type="EMBL" id="AK088939">
    <property type="protein sequence ID" value="BAC40663.1"/>
    <property type="status" value="ALT_INIT"/>
    <property type="molecule type" value="mRNA"/>
</dbReference>
<dbReference type="EMBL" id="AK151235">
    <property type="protein sequence ID" value="BAE30227.1"/>
    <property type="status" value="ALT_INIT"/>
    <property type="molecule type" value="mRNA"/>
</dbReference>
<dbReference type="EMBL" id="AK151938">
    <property type="protein sequence ID" value="BAE30814.1"/>
    <property type="status" value="ALT_INIT"/>
    <property type="molecule type" value="mRNA"/>
</dbReference>
<dbReference type="EMBL" id="AK152679">
    <property type="protein sequence ID" value="BAE31411.1"/>
    <property type="status" value="ALT_INIT"/>
    <property type="molecule type" value="mRNA"/>
</dbReference>
<dbReference type="EMBL" id="AK153346">
    <property type="protein sequence ID" value="BAE31922.1"/>
    <property type="status" value="ALT_INIT"/>
    <property type="molecule type" value="mRNA"/>
</dbReference>
<dbReference type="EMBL" id="BC005621">
    <property type="protein sequence ID" value="AAH05621.1"/>
    <property type="status" value="ALT_INIT"/>
    <property type="molecule type" value="mRNA"/>
</dbReference>
<dbReference type="RefSeq" id="NP_001346045.1">
    <property type="nucleotide sequence ID" value="NM_001359116.1"/>
</dbReference>
<dbReference type="RefSeq" id="NP_080424.2">
    <property type="nucleotide sequence ID" value="NM_026148.3"/>
</dbReference>
<dbReference type="RefSeq" id="XP_006513136.1">
    <property type="nucleotide sequence ID" value="XM_006513073.2"/>
</dbReference>
<dbReference type="RefSeq" id="XP_036011397.1">
    <property type="nucleotide sequence ID" value="XM_036155504.1"/>
</dbReference>
<dbReference type="SMR" id="Q99JW4"/>
<dbReference type="BioGRID" id="225940">
    <property type="interactions" value="8"/>
</dbReference>
<dbReference type="CORUM" id="Q99JW4"/>
<dbReference type="DIP" id="DIP-59289N"/>
<dbReference type="FunCoup" id="Q99JW4">
    <property type="interactions" value="1197"/>
</dbReference>
<dbReference type="IntAct" id="Q99JW4">
    <property type="interactions" value="3"/>
</dbReference>
<dbReference type="MINT" id="Q99JW4"/>
<dbReference type="STRING" id="10090.ENSMUSP00000020077"/>
<dbReference type="GlyGen" id="Q99JW4">
    <property type="glycosylation" value="1 site, 1 N-linked glycan (1 site)"/>
</dbReference>
<dbReference type="iPTMnet" id="Q99JW4"/>
<dbReference type="PhosphoSitePlus" id="Q99JW4"/>
<dbReference type="SwissPalm" id="Q99JW4"/>
<dbReference type="jPOST" id="Q99JW4"/>
<dbReference type="PaxDb" id="10090-ENSMUSP00000020078"/>
<dbReference type="ProteomicsDB" id="286204"/>
<dbReference type="Pumba" id="Q99JW4"/>
<dbReference type="DNASU" id="110829"/>
<dbReference type="GeneID" id="110829"/>
<dbReference type="KEGG" id="mmu:110829"/>
<dbReference type="UCSC" id="uc011xeb.1">
    <property type="organism name" value="mouse"/>
</dbReference>
<dbReference type="AGR" id="MGI:1195263"/>
<dbReference type="CTD" id="3987"/>
<dbReference type="MGI" id="MGI:1195263">
    <property type="gene designation" value="Lims1"/>
</dbReference>
<dbReference type="eggNOG" id="KOG2272">
    <property type="taxonomic scope" value="Eukaryota"/>
</dbReference>
<dbReference type="InParanoid" id="Q99JW4"/>
<dbReference type="OrthoDB" id="20689at2759"/>
<dbReference type="PhylomeDB" id="Q99JW4"/>
<dbReference type="TreeFam" id="TF314113"/>
<dbReference type="Reactome" id="R-MMU-446353">
    <property type="pathway name" value="Cell-extracellular matrix interactions"/>
</dbReference>
<dbReference type="Reactome" id="R-MMU-446388">
    <property type="pathway name" value="Regulation of cytoskeletal remodeling and cell spreading by IPP complex components"/>
</dbReference>
<dbReference type="BioGRID-ORCS" id="110829">
    <property type="hits" value="2 hits in 79 CRISPR screens"/>
</dbReference>
<dbReference type="ChiTaRS" id="Lims1">
    <property type="organism name" value="mouse"/>
</dbReference>
<dbReference type="PRO" id="PR:Q99JW4"/>
<dbReference type="Proteomes" id="UP000000589">
    <property type="component" value="Unplaced"/>
</dbReference>
<dbReference type="RNAct" id="Q99JW4">
    <property type="molecule type" value="protein"/>
</dbReference>
<dbReference type="GO" id="GO:0005925">
    <property type="term" value="C:focal adhesion"/>
    <property type="evidence" value="ECO:0000314"/>
    <property type="project" value="MGI"/>
</dbReference>
<dbReference type="GO" id="GO:0005886">
    <property type="term" value="C:plasma membrane"/>
    <property type="evidence" value="ECO:0007669"/>
    <property type="project" value="UniProtKB-SubCell"/>
</dbReference>
<dbReference type="GO" id="GO:0003779">
    <property type="term" value="F:actin binding"/>
    <property type="evidence" value="ECO:0007669"/>
    <property type="project" value="UniProtKB-KW"/>
</dbReference>
<dbReference type="GO" id="GO:0046872">
    <property type="term" value="F:metal ion binding"/>
    <property type="evidence" value="ECO:0007669"/>
    <property type="project" value="UniProtKB-KW"/>
</dbReference>
<dbReference type="GO" id="GO:0098609">
    <property type="term" value="P:cell-cell adhesion"/>
    <property type="evidence" value="ECO:0000315"/>
    <property type="project" value="MGI"/>
</dbReference>
<dbReference type="GO" id="GO:0045216">
    <property type="term" value="P:cell-cell junction organization"/>
    <property type="evidence" value="ECO:0000316"/>
    <property type="project" value="MGI"/>
</dbReference>
<dbReference type="GO" id="GO:0007160">
    <property type="term" value="P:cell-matrix adhesion"/>
    <property type="evidence" value="ECO:0000315"/>
    <property type="project" value="MGI"/>
</dbReference>
<dbReference type="GO" id="GO:1990705">
    <property type="term" value="P:cholangiocyte proliferation"/>
    <property type="evidence" value="ECO:0000316"/>
    <property type="project" value="MGI"/>
</dbReference>
<dbReference type="GO" id="GO:0043009">
    <property type="term" value="P:chordate embryonic development"/>
    <property type="evidence" value="ECO:0000315"/>
    <property type="project" value="MGI"/>
</dbReference>
<dbReference type="GO" id="GO:0007163">
    <property type="term" value="P:establishment or maintenance of cell polarity"/>
    <property type="evidence" value="ECO:0000315"/>
    <property type="project" value="MGI"/>
</dbReference>
<dbReference type="GO" id="GO:0097284">
    <property type="term" value="P:hepatocyte apoptotic process"/>
    <property type="evidence" value="ECO:0000316"/>
    <property type="project" value="MGI"/>
</dbReference>
<dbReference type="GO" id="GO:0007229">
    <property type="term" value="P:integrin-mediated signaling pathway"/>
    <property type="evidence" value="ECO:0000316"/>
    <property type="project" value="MGI"/>
</dbReference>
<dbReference type="GO" id="GO:1904055">
    <property type="term" value="P:negative regulation of cholangiocyte proliferation"/>
    <property type="evidence" value="ECO:0000316"/>
    <property type="project" value="MGI"/>
</dbReference>
<dbReference type="GO" id="GO:1903944">
    <property type="term" value="P:negative regulation of hepatocyte apoptotic process"/>
    <property type="evidence" value="ECO:0000316"/>
    <property type="project" value="MGI"/>
</dbReference>
<dbReference type="GO" id="GO:2000346">
    <property type="term" value="P:negative regulation of hepatocyte proliferation"/>
    <property type="evidence" value="ECO:0000316"/>
    <property type="project" value="MGI"/>
</dbReference>
<dbReference type="GO" id="GO:2000178">
    <property type="term" value="P:negative regulation of neural precursor cell proliferation"/>
    <property type="evidence" value="ECO:0000316"/>
    <property type="project" value="MGI"/>
</dbReference>
<dbReference type="GO" id="GO:0061351">
    <property type="term" value="P:neural precursor cell proliferation"/>
    <property type="evidence" value="ECO:0000316"/>
    <property type="project" value="MGI"/>
</dbReference>
<dbReference type="GO" id="GO:2001046">
    <property type="term" value="P:positive regulation of integrin-mediated signaling pathway"/>
    <property type="evidence" value="ECO:0000316"/>
    <property type="project" value="MGI"/>
</dbReference>
<dbReference type="CDD" id="cd09331">
    <property type="entry name" value="LIM1_PINCH"/>
    <property type="match status" value="1"/>
</dbReference>
<dbReference type="CDD" id="cd09332">
    <property type="entry name" value="LIM2_PINCH"/>
    <property type="match status" value="1"/>
</dbReference>
<dbReference type="CDD" id="cd09333">
    <property type="entry name" value="LIM3_PINCH"/>
    <property type="match status" value="1"/>
</dbReference>
<dbReference type="CDD" id="cd09334">
    <property type="entry name" value="LIM4_PINCH"/>
    <property type="match status" value="1"/>
</dbReference>
<dbReference type="CDD" id="cd09335">
    <property type="entry name" value="LIM5_PINCH"/>
    <property type="match status" value="1"/>
</dbReference>
<dbReference type="FunFam" id="2.10.110.10:FF:000011">
    <property type="entry name" value="Lim and senescent cell antigen-like-containing"/>
    <property type="match status" value="1"/>
</dbReference>
<dbReference type="FunFam" id="2.10.110.10:FF:000017">
    <property type="entry name" value="Lim and senescent cell antigen-like-containing"/>
    <property type="match status" value="1"/>
</dbReference>
<dbReference type="FunFam" id="2.10.110.10:FF:000019">
    <property type="entry name" value="Lim and senescent cell antigen-like-containing"/>
    <property type="match status" value="1"/>
</dbReference>
<dbReference type="FunFam" id="2.10.110.10:FF:000021">
    <property type="entry name" value="Lim and senescent cell antigen-like-containing"/>
    <property type="match status" value="1"/>
</dbReference>
<dbReference type="FunFam" id="2.10.110.10:FF:000062">
    <property type="entry name" value="LIM domain-containing protein"/>
    <property type="match status" value="1"/>
</dbReference>
<dbReference type="Gene3D" id="2.10.110.10">
    <property type="entry name" value="Cysteine Rich Protein"/>
    <property type="match status" value="5"/>
</dbReference>
<dbReference type="InterPro" id="IPR047944">
    <property type="entry name" value="LIMS1/2-like_LIM1"/>
</dbReference>
<dbReference type="InterPro" id="IPR017351">
    <property type="entry name" value="PINCH-1-4-like"/>
</dbReference>
<dbReference type="InterPro" id="IPR047946">
    <property type="entry name" value="PINCH-1/2-like"/>
</dbReference>
<dbReference type="InterPro" id="IPR001781">
    <property type="entry name" value="Znf_LIM"/>
</dbReference>
<dbReference type="PANTHER" id="PTHR24210:SF13">
    <property type="entry name" value="LIM AND SENESCENT CELL ANTIGEN-LIKE-CONTAINING DOMAIN PROTEIN 1"/>
    <property type="match status" value="1"/>
</dbReference>
<dbReference type="PANTHER" id="PTHR24210">
    <property type="entry name" value="LIM DOMAIN-CONTAINING PROTEIN"/>
    <property type="match status" value="1"/>
</dbReference>
<dbReference type="Pfam" id="PF00412">
    <property type="entry name" value="LIM"/>
    <property type="match status" value="5"/>
</dbReference>
<dbReference type="PIRSF" id="PIRSF038003">
    <property type="entry name" value="PINCH"/>
    <property type="match status" value="1"/>
</dbReference>
<dbReference type="SMART" id="SM00132">
    <property type="entry name" value="LIM"/>
    <property type="match status" value="5"/>
</dbReference>
<dbReference type="SUPFAM" id="SSF57716">
    <property type="entry name" value="Glucocorticoid receptor-like (DNA-binding domain)"/>
    <property type="match status" value="6"/>
</dbReference>
<dbReference type="PROSITE" id="PS00478">
    <property type="entry name" value="LIM_DOMAIN_1"/>
    <property type="match status" value="4"/>
</dbReference>
<dbReference type="PROSITE" id="PS50023">
    <property type="entry name" value="LIM_DOMAIN_2"/>
    <property type="match status" value="5"/>
</dbReference>
<comment type="function">
    <text evidence="2">Within the IPP (ILK-PINCH-PARVIN) complex, binds to F-actin, promoting F-actin bundling, a process required to generate force for actin cytoskeleton reorganization and subsequent dynamic cell adhesion events such as cell spreading and migration.</text>
</comment>
<comment type="subunit">
    <text evidence="2 4">Component of the heterotrimeric IPP (ILK-PINCH-PARVIN) complex composed of ILK, LIMS1/PINCH and PARVA; the complex binds to F-actin via the C-terminal tail of LIMS1 and the N-terminal region of PARVA, promoting F-actin filament bundling (By similarity). Formation of the IPP complex is dependent on protein kinase C and precedes integrin-mediated cell adhesion and spreading (By similarity). Competes with LIMS2 for interaction with ILK. Interacts with SH3/SH2 adapter NCK2, thereby linking the complex to cell surface receptors (By similarity). Interacts (via LIM zinc-binding 5) with TGFB1I1.</text>
</comment>
<comment type="subcellular location">
    <subcellularLocation>
        <location evidence="2">Cell junction</location>
        <location evidence="2">Focal adhesion</location>
    </subcellularLocation>
    <subcellularLocation>
        <location evidence="1">Cell membrane</location>
        <topology evidence="1">Peripheral membrane protein</topology>
        <orientation evidence="1">Cytoplasmic side</orientation>
    </subcellularLocation>
</comment>
<comment type="sequence caution" evidence="5">
    <conflict type="erroneous initiation">
        <sequence resource="EMBL-CDS" id="AAH05621"/>
    </conflict>
</comment>
<comment type="sequence caution" evidence="5">
    <conflict type="erroneous initiation">
        <sequence resource="EMBL-CDS" id="BAB29637"/>
    </conflict>
</comment>
<comment type="sequence caution" evidence="5">
    <conflict type="erroneous initiation">
        <sequence resource="EMBL-CDS" id="BAC38699"/>
    </conflict>
</comment>
<comment type="sequence caution" evidence="5">
    <conflict type="erroneous initiation">
        <sequence resource="EMBL-CDS" id="BAC40663"/>
    </conflict>
</comment>
<comment type="sequence caution" evidence="5">
    <conflict type="erroneous initiation">
        <sequence resource="EMBL-CDS" id="BAE30227"/>
    </conflict>
</comment>
<comment type="sequence caution" evidence="5">
    <conflict type="erroneous initiation">
        <sequence resource="EMBL-CDS" id="BAE30814"/>
    </conflict>
</comment>
<comment type="sequence caution" evidence="5">
    <conflict type="erroneous initiation">
        <sequence resource="EMBL-CDS" id="BAE31411"/>
    </conflict>
</comment>
<comment type="sequence caution" evidence="5">
    <conflict type="erroneous initiation">
        <sequence resource="EMBL-CDS" id="BAE31922"/>
    </conflict>
</comment>
<proteinExistence type="evidence at protein level"/>
<keyword id="KW-0007">Acetylation</keyword>
<keyword id="KW-0009">Actin-binding</keyword>
<keyword id="KW-0965">Cell junction</keyword>
<keyword id="KW-1003">Cell membrane</keyword>
<keyword id="KW-0440">LIM domain</keyword>
<keyword id="KW-0472">Membrane</keyword>
<keyword id="KW-0479">Metal-binding</keyword>
<keyword id="KW-1185">Reference proteome</keyword>
<keyword id="KW-0677">Repeat</keyword>
<keyword id="KW-0862">Zinc</keyword>
<accession>Q99JW4</accession>
<accession>Q3UAT7</accession>
<accession>Q8BTR6</accession>
<accession>Q9D5T4</accession>
<gene>
    <name type="primary">Lims1</name>
    <name type="synonym">Pinch1</name>
</gene>
<reference key="1">
    <citation type="journal article" date="2005" name="Science">
        <title>The transcriptional landscape of the mammalian genome.</title>
        <authorList>
            <person name="Carninci P."/>
            <person name="Kasukawa T."/>
            <person name="Katayama S."/>
            <person name="Gough J."/>
            <person name="Frith M.C."/>
            <person name="Maeda N."/>
            <person name="Oyama R."/>
            <person name="Ravasi T."/>
            <person name="Lenhard B."/>
            <person name="Wells C."/>
            <person name="Kodzius R."/>
            <person name="Shimokawa K."/>
            <person name="Bajic V.B."/>
            <person name="Brenner S.E."/>
            <person name="Batalov S."/>
            <person name="Forrest A.R."/>
            <person name="Zavolan M."/>
            <person name="Davis M.J."/>
            <person name="Wilming L.G."/>
            <person name="Aidinis V."/>
            <person name="Allen J.E."/>
            <person name="Ambesi-Impiombato A."/>
            <person name="Apweiler R."/>
            <person name="Aturaliya R.N."/>
            <person name="Bailey T.L."/>
            <person name="Bansal M."/>
            <person name="Baxter L."/>
            <person name="Beisel K.W."/>
            <person name="Bersano T."/>
            <person name="Bono H."/>
            <person name="Chalk A.M."/>
            <person name="Chiu K.P."/>
            <person name="Choudhary V."/>
            <person name="Christoffels A."/>
            <person name="Clutterbuck D.R."/>
            <person name="Crowe M.L."/>
            <person name="Dalla E."/>
            <person name="Dalrymple B.P."/>
            <person name="de Bono B."/>
            <person name="Della Gatta G."/>
            <person name="di Bernardo D."/>
            <person name="Down T."/>
            <person name="Engstrom P."/>
            <person name="Fagiolini M."/>
            <person name="Faulkner G."/>
            <person name="Fletcher C.F."/>
            <person name="Fukushima T."/>
            <person name="Furuno M."/>
            <person name="Futaki S."/>
            <person name="Gariboldi M."/>
            <person name="Georgii-Hemming P."/>
            <person name="Gingeras T.R."/>
            <person name="Gojobori T."/>
            <person name="Green R.E."/>
            <person name="Gustincich S."/>
            <person name="Harbers M."/>
            <person name="Hayashi Y."/>
            <person name="Hensch T.K."/>
            <person name="Hirokawa N."/>
            <person name="Hill D."/>
            <person name="Huminiecki L."/>
            <person name="Iacono M."/>
            <person name="Ikeo K."/>
            <person name="Iwama A."/>
            <person name="Ishikawa T."/>
            <person name="Jakt M."/>
            <person name="Kanapin A."/>
            <person name="Katoh M."/>
            <person name="Kawasawa Y."/>
            <person name="Kelso J."/>
            <person name="Kitamura H."/>
            <person name="Kitano H."/>
            <person name="Kollias G."/>
            <person name="Krishnan S.P."/>
            <person name="Kruger A."/>
            <person name="Kummerfeld S.K."/>
            <person name="Kurochkin I.V."/>
            <person name="Lareau L.F."/>
            <person name="Lazarevic D."/>
            <person name="Lipovich L."/>
            <person name="Liu J."/>
            <person name="Liuni S."/>
            <person name="McWilliam S."/>
            <person name="Madan Babu M."/>
            <person name="Madera M."/>
            <person name="Marchionni L."/>
            <person name="Matsuda H."/>
            <person name="Matsuzawa S."/>
            <person name="Miki H."/>
            <person name="Mignone F."/>
            <person name="Miyake S."/>
            <person name="Morris K."/>
            <person name="Mottagui-Tabar S."/>
            <person name="Mulder N."/>
            <person name="Nakano N."/>
            <person name="Nakauchi H."/>
            <person name="Ng P."/>
            <person name="Nilsson R."/>
            <person name="Nishiguchi S."/>
            <person name="Nishikawa S."/>
            <person name="Nori F."/>
            <person name="Ohara O."/>
            <person name="Okazaki Y."/>
            <person name="Orlando V."/>
            <person name="Pang K.C."/>
            <person name="Pavan W.J."/>
            <person name="Pavesi G."/>
            <person name="Pesole G."/>
            <person name="Petrovsky N."/>
            <person name="Piazza S."/>
            <person name="Reed J."/>
            <person name="Reid J.F."/>
            <person name="Ring B.Z."/>
            <person name="Ringwald M."/>
            <person name="Rost B."/>
            <person name="Ruan Y."/>
            <person name="Salzberg S.L."/>
            <person name="Sandelin A."/>
            <person name="Schneider C."/>
            <person name="Schoenbach C."/>
            <person name="Sekiguchi K."/>
            <person name="Semple C.A."/>
            <person name="Seno S."/>
            <person name="Sessa L."/>
            <person name="Sheng Y."/>
            <person name="Shibata Y."/>
            <person name="Shimada H."/>
            <person name="Shimada K."/>
            <person name="Silva D."/>
            <person name="Sinclair B."/>
            <person name="Sperling S."/>
            <person name="Stupka E."/>
            <person name="Sugiura K."/>
            <person name="Sultana R."/>
            <person name="Takenaka Y."/>
            <person name="Taki K."/>
            <person name="Tammoja K."/>
            <person name="Tan S.L."/>
            <person name="Tang S."/>
            <person name="Taylor M.S."/>
            <person name="Tegner J."/>
            <person name="Teichmann S.A."/>
            <person name="Ueda H.R."/>
            <person name="van Nimwegen E."/>
            <person name="Verardo R."/>
            <person name="Wei C.L."/>
            <person name="Yagi K."/>
            <person name="Yamanishi H."/>
            <person name="Zabarovsky E."/>
            <person name="Zhu S."/>
            <person name="Zimmer A."/>
            <person name="Hide W."/>
            <person name="Bult C."/>
            <person name="Grimmond S.M."/>
            <person name="Teasdale R.D."/>
            <person name="Liu E.T."/>
            <person name="Brusic V."/>
            <person name="Quackenbush J."/>
            <person name="Wahlestedt C."/>
            <person name="Mattick J.S."/>
            <person name="Hume D.A."/>
            <person name="Kai C."/>
            <person name="Sasaki D."/>
            <person name="Tomaru Y."/>
            <person name="Fukuda S."/>
            <person name="Kanamori-Katayama M."/>
            <person name="Suzuki M."/>
            <person name="Aoki J."/>
            <person name="Arakawa T."/>
            <person name="Iida J."/>
            <person name="Imamura K."/>
            <person name="Itoh M."/>
            <person name="Kato T."/>
            <person name="Kawaji H."/>
            <person name="Kawagashira N."/>
            <person name="Kawashima T."/>
            <person name="Kojima M."/>
            <person name="Kondo S."/>
            <person name="Konno H."/>
            <person name="Nakano K."/>
            <person name="Ninomiya N."/>
            <person name="Nishio T."/>
            <person name="Okada M."/>
            <person name="Plessy C."/>
            <person name="Shibata K."/>
            <person name="Shiraki T."/>
            <person name="Suzuki S."/>
            <person name="Tagami M."/>
            <person name="Waki K."/>
            <person name="Watahiki A."/>
            <person name="Okamura-Oho Y."/>
            <person name="Suzuki H."/>
            <person name="Kawai J."/>
            <person name="Hayashizaki Y."/>
        </authorList>
    </citation>
    <scope>NUCLEOTIDE SEQUENCE [LARGE SCALE MRNA]</scope>
    <source>
        <strain>C57BL/6J</strain>
        <strain>NOD</strain>
        <tissue>Bone marrow</tissue>
        <tissue>Testis</tissue>
        <tissue>Thymus</tissue>
    </source>
</reference>
<reference key="2">
    <citation type="journal article" date="2004" name="Genome Res.">
        <title>The status, quality, and expansion of the NIH full-length cDNA project: the Mammalian Gene Collection (MGC).</title>
        <authorList>
            <consortium name="The MGC Project Team"/>
        </authorList>
    </citation>
    <scope>NUCLEOTIDE SEQUENCE [LARGE SCALE MRNA]</scope>
    <source>
        <strain>FVB/N</strain>
        <tissue>Mammary tumor</tissue>
    </source>
</reference>
<reference key="3">
    <citation type="journal article" date="2006" name="J. Biol. Chem.">
        <title>Oligomerizing potential of a focal adhesion LIM protein Hic-5 organizing a nuclear-cytoplasmic shuttling complex.</title>
        <authorList>
            <person name="Mori K."/>
            <person name="Asakawa M."/>
            <person name="Hayashi M."/>
            <person name="Imura M."/>
            <person name="Ohki T."/>
            <person name="Hirao E."/>
            <person name="Kim-Kaneyama J.-R."/>
            <person name="Nose K."/>
            <person name="Shibanuma M."/>
        </authorList>
    </citation>
    <scope>INTERACTION WITH TGFB1I1</scope>
</reference>
<reference key="4">
    <citation type="journal article" date="2010" name="Cell">
        <title>A tissue-specific atlas of mouse protein phosphorylation and expression.</title>
        <authorList>
            <person name="Huttlin E.L."/>
            <person name="Jedrychowski M.P."/>
            <person name="Elias J.E."/>
            <person name="Goswami T."/>
            <person name="Rad R."/>
            <person name="Beausoleil S.A."/>
            <person name="Villen J."/>
            <person name="Haas W."/>
            <person name="Sowa M.E."/>
            <person name="Gygi S.P."/>
        </authorList>
    </citation>
    <scope>IDENTIFICATION BY MASS SPECTROMETRY [LARGE SCALE ANALYSIS]</scope>
    <source>
        <tissue>Brown adipose tissue</tissue>
        <tissue>Heart</tissue>
        <tissue>Kidney</tissue>
        <tissue>Lung</tissue>
        <tissue>Spleen</tissue>
        <tissue>Testis</tissue>
    </source>
</reference>
<organism>
    <name type="scientific">Mus musculus</name>
    <name type="common">Mouse</name>
    <dbReference type="NCBI Taxonomy" id="10090"/>
    <lineage>
        <taxon>Eukaryota</taxon>
        <taxon>Metazoa</taxon>
        <taxon>Chordata</taxon>
        <taxon>Craniata</taxon>
        <taxon>Vertebrata</taxon>
        <taxon>Euteleostomi</taxon>
        <taxon>Mammalia</taxon>
        <taxon>Eutheria</taxon>
        <taxon>Euarchontoglires</taxon>
        <taxon>Glires</taxon>
        <taxon>Rodentia</taxon>
        <taxon>Myomorpha</taxon>
        <taxon>Muroidea</taxon>
        <taxon>Muridae</taxon>
        <taxon>Murinae</taxon>
        <taxon>Mus</taxon>
        <taxon>Mus</taxon>
    </lineage>
</organism>
<protein>
    <recommendedName>
        <fullName>LIM and senescent cell antigen-like-containing domain protein 1</fullName>
    </recommendedName>
    <alternativeName>
        <fullName>Particularly interesting new Cys-His protein 1</fullName>
        <shortName>PINCH-1</shortName>
    </alternativeName>
</protein>
<evidence type="ECO:0000250" key="1"/>
<evidence type="ECO:0000250" key="2">
    <source>
        <dbReference type="UniProtKB" id="P48059"/>
    </source>
</evidence>
<evidence type="ECO:0000255" key="3">
    <source>
        <dbReference type="PROSITE-ProRule" id="PRU00125"/>
    </source>
</evidence>
<evidence type="ECO:0000269" key="4">
    <source>
    </source>
</evidence>
<evidence type="ECO:0000305" key="5"/>
<name>LIMS1_MOUSE</name>
<feature type="initiator methionine" description="Removed" evidence="2">
    <location>
        <position position="1"/>
    </location>
</feature>
<feature type="chain" id="PRO_0000266009" description="LIM and senescent cell antigen-like-containing domain protein 1">
    <location>
        <begin position="2"/>
        <end position="325"/>
    </location>
</feature>
<feature type="domain" description="LIM zinc-binding 1" evidence="3">
    <location>
        <begin position="10"/>
        <end position="62"/>
    </location>
</feature>
<feature type="domain" description="LIM zinc-binding 2" evidence="3">
    <location>
        <begin position="71"/>
        <end position="121"/>
    </location>
</feature>
<feature type="domain" description="LIM zinc-binding 3" evidence="3">
    <location>
        <begin position="135"/>
        <end position="184"/>
    </location>
</feature>
<feature type="domain" description="LIM zinc-binding 4" evidence="3">
    <location>
        <begin position="193"/>
        <end position="243"/>
    </location>
</feature>
<feature type="domain" description="LIM zinc-binding 5" evidence="3">
    <location>
        <begin position="252"/>
        <end position="303"/>
    </location>
</feature>
<feature type="modified residue" description="N-acetylalanine" evidence="2">
    <location>
        <position position="2"/>
    </location>
</feature>
<feature type="sequence conflict" description="In Ref. 1; BAE30227." evidence="5" ref="1">
    <original>C</original>
    <variation>S</variation>
    <location>
        <position position="59"/>
    </location>
</feature>
<feature type="sequence conflict" description="In Ref. 1; BAB29637." evidence="5" ref="1">
    <original>N</original>
    <variation>D</variation>
    <location>
        <position position="123"/>
    </location>
</feature>
<feature type="sequence conflict" description="In Ref. 1; BAB29637." evidence="5" ref="1">
    <original>I</original>
    <variation>T</variation>
    <location>
        <position position="148"/>
    </location>
</feature>
<feature type="sequence conflict" description="In Ref. 1; BAC40663." evidence="5" ref="1">
    <original>A</original>
    <variation>V</variation>
    <location>
        <position position="170"/>
    </location>
</feature>
<sequence length="325" mass="37240">MANALASATCERCKGGFAPAEKIVNSNGELYHEQCFVCAQCFQQFPEGLFYEFEGRKYCEHDFQMLFAPCCHQCGEFIIGRVIKAMNNSWHPECFRCDLCQEVLADIGFVKNAGRHLCRPCHNREKARGLGKYICQKCHAIIDEQPLIFKNDPYHPDHFNCANCGKELTADARELKGELYCLPCHDKMGVPICGACRRPIEGRVVNAMGKQWHVEHFVCAKCEKPFLGHRHYERKGLAYCETHYNQLFGDVCFHCNRVIEGDVVSALNKAWCVSCFACSTCNTKLTLKNKFVEFDMKPVCKKCYEKFPLELKKRLKKLSETLGRK</sequence>